<reference key="1">
    <citation type="submission" date="2007-08" db="EMBL/GenBank/DDBJ databases">
        <authorList>
            <consortium name="The Citrobacter koseri Genome Sequencing Project"/>
            <person name="McClelland M."/>
            <person name="Sanderson E.K."/>
            <person name="Porwollik S."/>
            <person name="Spieth J."/>
            <person name="Clifton W.S."/>
            <person name="Latreille P."/>
            <person name="Courtney L."/>
            <person name="Wang C."/>
            <person name="Pepin K."/>
            <person name="Bhonagiri V."/>
            <person name="Nash W."/>
            <person name="Johnson M."/>
            <person name="Thiruvilangam P."/>
            <person name="Wilson R."/>
        </authorList>
    </citation>
    <scope>NUCLEOTIDE SEQUENCE [LARGE SCALE GENOMIC DNA]</scope>
    <source>
        <strain>ATCC BAA-895 / CDC 4225-83 / SGSC4696</strain>
    </source>
</reference>
<accession>A8AQ55</accession>
<keyword id="KW-0413">Isomerase</keyword>
<keyword id="KW-1185">Reference proteome</keyword>
<keyword id="KW-0819">tRNA processing</keyword>
<dbReference type="EC" id="5.4.99.25" evidence="1"/>
<dbReference type="EMBL" id="CP000822">
    <property type="protein sequence ID" value="ABV15618.1"/>
    <property type="molecule type" value="Genomic_DNA"/>
</dbReference>
<dbReference type="RefSeq" id="WP_012135299.1">
    <property type="nucleotide sequence ID" value="NC_009792.1"/>
</dbReference>
<dbReference type="SMR" id="A8AQ55"/>
<dbReference type="STRING" id="290338.CKO_04565"/>
<dbReference type="GeneID" id="45138110"/>
<dbReference type="KEGG" id="cko:CKO_04565"/>
<dbReference type="HOGENOM" id="CLU_032087_0_3_6"/>
<dbReference type="OrthoDB" id="9802309at2"/>
<dbReference type="Proteomes" id="UP000008148">
    <property type="component" value="Chromosome"/>
</dbReference>
<dbReference type="GO" id="GO:0003723">
    <property type="term" value="F:RNA binding"/>
    <property type="evidence" value="ECO:0007669"/>
    <property type="project" value="InterPro"/>
</dbReference>
<dbReference type="GO" id="GO:0160148">
    <property type="term" value="F:tRNA pseudouridine(55) synthase activity"/>
    <property type="evidence" value="ECO:0007669"/>
    <property type="project" value="UniProtKB-EC"/>
</dbReference>
<dbReference type="GO" id="GO:1990481">
    <property type="term" value="P:mRNA pseudouridine synthesis"/>
    <property type="evidence" value="ECO:0007669"/>
    <property type="project" value="TreeGrafter"/>
</dbReference>
<dbReference type="GO" id="GO:0031119">
    <property type="term" value="P:tRNA pseudouridine synthesis"/>
    <property type="evidence" value="ECO:0007669"/>
    <property type="project" value="UniProtKB-UniRule"/>
</dbReference>
<dbReference type="CDD" id="cd02573">
    <property type="entry name" value="PseudoU_synth_EcTruB"/>
    <property type="match status" value="1"/>
</dbReference>
<dbReference type="CDD" id="cd21152">
    <property type="entry name" value="PUA_TruB_bacterial"/>
    <property type="match status" value="1"/>
</dbReference>
<dbReference type="FunFam" id="2.30.130.10:FF:000004">
    <property type="entry name" value="tRNA pseudouridine synthase B"/>
    <property type="match status" value="1"/>
</dbReference>
<dbReference type="FunFam" id="3.30.2350.10:FF:000003">
    <property type="entry name" value="tRNA pseudouridine synthase B"/>
    <property type="match status" value="1"/>
</dbReference>
<dbReference type="Gene3D" id="3.30.2350.10">
    <property type="entry name" value="Pseudouridine synthase"/>
    <property type="match status" value="1"/>
</dbReference>
<dbReference type="Gene3D" id="2.30.130.10">
    <property type="entry name" value="PUA domain"/>
    <property type="match status" value="1"/>
</dbReference>
<dbReference type="HAMAP" id="MF_01080">
    <property type="entry name" value="TruB_bact"/>
    <property type="match status" value="1"/>
</dbReference>
<dbReference type="InterPro" id="IPR020103">
    <property type="entry name" value="PsdUridine_synth_cat_dom_sf"/>
</dbReference>
<dbReference type="InterPro" id="IPR002501">
    <property type="entry name" value="PsdUridine_synth_N"/>
</dbReference>
<dbReference type="InterPro" id="IPR015947">
    <property type="entry name" value="PUA-like_sf"/>
</dbReference>
<dbReference type="InterPro" id="IPR036974">
    <property type="entry name" value="PUA_sf"/>
</dbReference>
<dbReference type="InterPro" id="IPR014780">
    <property type="entry name" value="tRNA_psdUridine_synth_TruB"/>
</dbReference>
<dbReference type="InterPro" id="IPR015240">
    <property type="entry name" value="tRNA_sdUridine_synth_fam1_C"/>
</dbReference>
<dbReference type="InterPro" id="IPR032819">
    <property type="entry name" value="TruB_C"/>
</dbReference>
<dbReference type="NCBIfam" id="TIGR00431">
    <property type="entry name" value="TruB"/>
    <property type="match status" value="1"/>
</dbReference>
<dbReference type="PANTHER" id="PTHR13767:SF2">
    <property type="entry name" value="PSEUDOURIDYLATE SYNTHASE TRUB1"/>
    <property type="match status" value="1"/>
</dbReference>
<dbReference type="PANTHER" id="PTHR13767">
    <property type="entry name" value="TRNA-PSEUDOURIDINE SYNTHASE"/>
    <property type="match status" value="1"/>
</dbReference>
<dbReference type="Pfam" id="PF09157">
    <property type="entry name" value="TruB-C_2"/>
    <property type="match status" value="1"/>
</dbReference>
<dbReference type="Pfam" id="PF16198">
    <property type="entry name" value="TruB_C_2"/>
    <property type="match status" value="1"/>
</dbReference>
<dbReference type="Pfam" id="PF01509">
    <property type="entry name" value="TruB_N"/>
    <property type="match status" value="1"/>
</dbReference>
<dbReference type="SUPFAM" id="SSF55120">
    <property type="entry name" value="Pseudouridine synthase"/>
    <property type="match status" value="1"/>
</dbReference>
<dbReference type="SUPFAM" id="SSF88697">
    <property type="entry name" value="PUA domain-like"/>
    <property type="match status" value="1"/>
</dbReference>
<feature type="chain" id="PRO_1000084569" description="tRNA pseudouridine synthase B">
    <location>
        <begin position="1"/>
        <end position="314"/>
    </location>
</feature>
<feature type="active site" description="Nucleophile" evidence="1">
    <location>
        <position position="48"/>
    </location>
</feature>
<feature type="binding site" evidence="1">
    <location>
        <position position="43"/>
    </location>
    <ligand>
        <name>substrate</name>
    </ligand>
</feature>
<feature type="binding site" evidence="1">
    <location>
        <position position="76"/>
    </location>
    <ligand>
        <name>substrate</name>
    </ligand>
</feature>
<feature type="binding site" evidence="1">
    <location>
        <position position="179"/>
    </location>
    <ligand>
        <name>substrate</name>
    </ligand>
</feature>
<feature type="binding site" evidence="1">
    <location>
        <position position="200"/>
    </location>
    <ligand>
        <name>substrate</name>
    </ligand>
</feature>
<proteinExistence type="inferred from homology"/>
<sequence length="314" mass="35227">MSRPRRRGRDIHGVLLLDKPQGMSSNDVLQKVKRIYNANRAGHTGALDPLATGMLPICLGEATKFSQYLLDSDKRYRVIARLGQRTDTSDADGQIVQERPVTFSAEQLAAALETFRGDIEQIPSMYSALKYQGKKLYEYARQGIEVPREARPITVYELLFIRHEGDELELEVHCSKGTYIRTIIDDLGEKLGCGAHVIFLRRLAVSKYPVDRMVTLEQLRELVEQAERQDIPAAQLLDPLLMPMDSPASDYPVVNLPLTSSVYFKNGNPVRTTGVPLEGLVRVTEGDDEKFIGMGEIDDEGRVAPRRLVVEYPA</sequence>
<organism>
    <name type="scientific">Citrobacter koseri (strain ATCC BAA-895 / CDC 4225-83 / SGSC4696)</name>
    <dbReference type="NCBI Taxonomy" id="290338"/>
    <lineage>
        <taxon>Bacteria</taxon>
        <taxon>Pseudomonadati</taxon>
        <taxon>Pseudomonadota</taxon>
        <taxon>Gammaproteobacteria</taxon>
        <taxon>Enterobacterales</taxon>
        <taxon>Enterobacteriaceae</taxon>
        <taxon>Citrobacter</taxon>
    </lineage>
</organism>
<gene>
    <name evidence="1" type="primary">truB</name>
    <name type="ordered locus">CKO_04565</name>
</gene>
<protein>
    <recommendedName>
        <fullName evidence="1">tRNA pseudouridine synthase B</fullName>
        <ecNumber evidence="1">5.4.99.25</ecNumber>
    </recommendedName>
    <alternativeName>
        <fullName evidence="1">tRNA pseudouridine(55) synthase</fullName>
        <shortName evidence="1">Psi55 synthase</shortName>
    </alternativeName>
    <alternativeName>
        <fullName evidence="1">tRNA pseudouridylate synthase</fullName>
    </alternativeName>
    <alternativeName>
        <fullName evidence="1">tRNA-uridine isomerase</fullName>
    </alternativeName>
</protein>
<evidence type="ECO:0000255" key="1">
    <source>
        <dbReference type="HAMAP-Rule" id="MF_01080"/>
    </source>
</evidence>
<comment type="function">
    <text evidence="1">Responsible for synthesis of pseudouridine from uracil-55 in the psi GC loop of transfer RNAs.</text>
</comment>
<comment type="catalytic activity">
    <reaction evidence="1">
        <text>uridine(55) in tRNA = pseudouridine(55) in tRNA</text>
        <dbReference type="Rhea" id="RHEA:42532"/>
        <dbReference type="Rhea" id="RHEA-COMP:10101"/>
        <dbReference type="Rhea" id="RHEA-COMP:10102"/>
        <dbReference type="ChEBI" id="CHEBI:65314"/>
        <dbReference type="ChEBI" id="CHEBI:65315"/>
        <dbReference type="EC" id="5.4.99.25"/>
    </reaction>
</comment>
<comment type="similarity">
    <text evidence="1">Belongs to the pseudouridine synthase TruB family. Type 1 subfamily.</text>
</comment>
<name>TRUB_CITK8</name>